<reference key="1">
    <citation type="journal article" date="2005" name="Science">
        <title>The genome of the basidiomycetous yeast and human pathogen Cryptococcus neoformans.</title>
        <authorList>
            <person name="Loftus B.J."/>
            <person name="Fung E."/>
            <person name="Roncaglia P."/>
            <person name="Rowley D."/>
            <person name="Amedeo P."/>
            <person name="Bruno D."/>
            <person name="Vamathevan J."/>
            <person name="Miranda M."/>
            <person name="Anderson I.J."/>
            <person name="Fraser J.A."/>
            <person name="Allen J.E."/>
            <person name="Bosdet I.E."/>
            <person name="Brent M.R."/>
            <person name="Chiu R."/>
            <person name="Doering T.L."/>
            <person name="Donlin M.J."/>
            <person name="D'Souza C.A."/>
            <person name="Fox D.S."/>
            <person name="Grinberg V."/>
            <person name="Fu J."/>
            <person name="Fukushima M."/>
            <person name="Haas B.J."/>
            <person name="Huang J.C."/>
            <person name="Janbon G."/>
            <person name="Jones S.J.M."/>
            <person name="Koo H.L."/>
            <person name="Krzywinski M.I."/>
            <person name="Kwon-Chung K.J."/>
            <person name="Lengeler K.B."/>
            <person name="Maiti R."/>
            <person name="Marra M.A."/>
            <person name="Marra R.E."/>
            <person name="Mathewson C.A."/>
            <person name="Mitchell T.G."/>
            <person name="Pertea M."/>
            <person name="Riggs F.R."/>
            <person name="Salzberg S.L."/>
            <person name="Schein J.E."/>
            <person name="Shvartsbeyn A."/>
            <person name="Shin H."/>
            <person name="Shumway M."/>
            <person name="Specht C.A."/>
            <person name="Suh B.B."/>
            <person name="Tenney A."/>
            <person name="Utterback T.R."/>
            <person name="Wickes B.L."/>
            <person name="Wortman J.R."/>
            <person name="Wye N.H."/>
            <person name="Kronstad J.W."/>
            <person name="Lodge J.K."/>
            <person name="Heitman J."/>
            <person name="Davis R.W."/>
            <person name="Fraser C.M."/>
            <person name="Hyman R.W."/>
        </authorList>
    </citation>
    <scope>NUCLEOTIDE SEQUENCE [LARGE SCALE GENOMIC DNA]</scope>
    <source>
        <strain>B-3501A</strain>
    </source>
</reference>
<feature type="transit peptide" description="Mitochondrion" evidence="2">
    <location>
        <begin position="1"/>
        <end position="28"/>
    </location>
</feature>
<feature type="chain" id="PRO_0000410182" description="Presequence translocated-associated motor subunit PAM17, mitochondrial">
    <location>
        <begin position="29"/>
        <end position="217"/>
    </location>
</feature>
<feature type="transmembrane region" description="Helical" evidence="2">
    <location>
        <begin position="78"/>
        <end position="98"/>
    </location>
</feature>
<feature type="transmembrane region" description="Helical" evidence="2">
    <location>
        <begin position="126"/>
        <end position="146"/>
    </location>
</feature>
<feature type="region of interest" description="Disordered" evidence="3">
    <location>
        <begin position="33"/>
        <end position="56"/>
    </location>
</feature>
<feature type="compositionally biased region" description="Low complexity" evidence="3">
    <location>
        <begin position="33"/>
        <end position="45"/>
    </location>
</feature>
<feature type="compositionally biased region" description="Polar residues" evidence="3">
    <location>
        <begin position="46"/>
        <end position="55"/>
    </location>
</feature>
<dbReference type="EMBL" id="AAEY01000036">
    <property type="protein sequence ID" value="EAL19830.1"/>
    <property type="molecule type" value="Genomic_DNA"/>
</dbReference>
<dbReference type="RefSeq" id="XP_774477.1">
    <property type="nucleotide sequence ID" value="XM_769384.1"/>
</dbReference>
<dbReference type="GeneID" id="4937157"/>
<dbReference type="KEGG" id="cnb:CNBG1230"/>
<dbReference type="VEuPathDB" id="FungiDB:CNBG1230"/>
<dbReference type="HOGENOM" id="CLU_068297_2_0_1"/>
<dbReference type="OrthoDB" id="4815at5206"/>
<dbReference type="GO" id="GO:0001405">
    <property type="term" value="C:PAM complex, Tim23 associated import motor"/>
    <property type="evidence" value="ECO:0007669"/>
    <property type="project" value="InterPro"/>
</dbReference>
<dbReference type="GO" id="GO:0030150">
    <property type="term" value="P:protein import into mitochondrial matrix"/>
    <property type="evidence" value="ECO:0007669"/>
    <property type="project" value="TreeGrafter"/>
</dbReference>
<dbReference type="InterPro" id="IPR013875">
    <property type="entry name" value="Pam17"/>
</dbReference>
<dbReference type="PANTHER" id="PTHR28021">
    <property type="entry name" value="PRESEQUENCE TRANSLOCATED-ASSOCIATED MOTOR SUBUNIT PAM17, MITOCHONDRIAL"/>
    <property type="match status" value="1"/>
</dbReference>
<dbReference type="PANTHER" id="PTHR28021:SF1">
    <property type="entry name" value="PRESEQUENCE TRANSLOCATED-ASSOCIATED MOTOR SUBUNIT PAM17, MITOCHONDRIAL"/>
    <property type="match status" value="1"/>
</dbReference>
<dbReference type="Pfam" id="PF08566">
    <property type="entry name" value="Pam17"/>
    <property type="match status" value="1"/>
</dbReference>
<accession>P0CP49</accession>
<accession>Q55PU1</accession>
<accession>Q5KDL4</accession>
<evidence type="ECO:0000250" key="1"/>
<evidence type="ECO:0000255" key="2"/>
<evidence type="ECO:0000256" key="3">
    <source>
        <dbReference type="SAM" id="MobiDB-lite"/>
    </source>
</evidence>
<evidence type="ECO:0000305" key="4"/>
<keyword id="KW-0472">Membrane</keyword>
<keyword id="KW-0496">Mitochondrion</keyword>
<keyword id="KW-0999">Mitochondrion inner membrane</keyword>
<keyword id="KW-0653">Protein transport</keyword>
<keyword id="KW-0809">Transit peptide</keyword>
<keyword id="KW-0811">Translocation</keyword>
<keyword id="KW-0812">Transmembrane</keyword>
<keyword id="KW-1133">Transmembrane helix</keyword>
<keyword id="KW-0813">Transport</keyword>
<protein>
    <recommendedName>
        <fullName>Presequence translocated-associated motor subunit PAM17, mitochondrial</fullName>
    </recommendedName>
</protein>
<gene>
    <name type="primary">PAM17</name>
    <name type="ordered locus">CNBG1230</name>
</gene>
<comment type="function">
    <text evidence="1">Component of the PAM complex, a complex required for the translocation of transit peptide-containing proteins from the inner membrane into the mitochondrial matrix in an ATP-dependent manner.</text>
</comment>
<comment type="subunit">
    <text evidence="1">Component of the PAM complex, at least composed of mtHsp70 (SSC1), MGE1, TIM44, PAM16, PAM17 and PAM18.</text>
</comment>
<comment type="subcellular location">
    <subcellularLocation>
        <location evidence="1">Mitochondrion inner membrane</location>
        <topology evidence="1">Multi-pass membrane protein</topology>
    </subcellularLocation>
</comment>
<comment type="similarity">
    <text evidence="4">Belongs to the PAM17 family.</text>
</comment>
<organism>
    <name type="scientific">Cryptococcus neoformans var. neoformans serotype D (strain B-3501A)</name>
    <name type="common">Filobasidiella neoformans</name>
    <dbReference type="NCBI Taxonomy" id="283643"/>
    <lineage>
        <taxon>Eukaryota</taxon>
        <taxon>Fungi</taxon>
        <taxon>Dikarya</taxon>
        <taxon>Basidiomycota</taxon>
        <taxon>Agaricomycotina</taxon>
        <taxon>Tremellomycetes</taxon>
        <taxon>Tremellales</taxon>
        <taxon>Cryptococcaceae</taxon>
        <taxon>Cryptococcus</taxon>
        <taxon>Cryptococcus neoformans species complex</taxon>
    </lineage>
</organism>
<name>PAM17_CRYNB</name>
<sequence>MSRSVFSTLRPVIGQKTTLAPFALSLRHASSSSSPFSTPTEPTSFHTQPSHSTPTGPLPLTWPSYLSLRRQRRLWSTLTSVPTTFLGLFLGGGYFASLEADPSQLIFGVEPMFVYGGATLGCMALGYLIGPSVGATLFSLTHPSIARGNPAPLEVMDREFYHRIRKNRADPRFQSVQNIVPDFYGEKIVSLSTYRRWLRDQAVYKRKAMHGVPGEDL</sequence>
<proteinExistence type="inferred from homology"/>